<protein>
    <recommendedName>
        <fullName evidence="1">Hydrogenase maturation factor HypB</fullName>
    </recommendedName>
</protein>
<reference key="1">
    <citation type="journal article" date="1993" name="Arch. Microbiol.">
        <title>Analysis of a pleiotropic gene region involved in formation of catalytically active hydrogenases in Alcaligenes eutrophus H16.</title>
        <authorList>
            <person name="Dernedde J."/>
            <person name="Eitinger M."/>
            <person name="Friedrich B."/>
        </authorList>
    </citation>
    <scope>NUCLEOTIDE SEQUENCE [GENOMIC DNA]</scope>
</reference>
<reference key="2">
    <citation type="journal article" date="1996" name="Eur. J. Biochem.">
        <title>hyp gene products in Alcaligenes eutrophus are part of a hydrogenase-maturation system.</title>
        <authorList>
            <person name="Dernedde J."/>
            <person name="Eitinger T."/>
            <person name="Patenge N."/>
            <person name="Friedrich B."/>
        </authorList>
    </citation>
    <scope>SEQUENCE REVISION</scope>
</reference>
<reference key="3">
    <citation type="journal article" date="2003" name="J. Mol. Biol.">
        <title>Complete nucleotide sequence of pHG1: a Ralstonia eutropha H16 megaplasmid encoding key enzymes of H(2)-based lithoautotrophy and anaerobiosis.</title>
        <authorList>
            <person name="Schwartz E."/>
            <person name="Henne A."/>
            <person name="Cramm R."/>
            <person name="Eitinger T."/>
            <person name="Friedrich B."/>
            <person name="Gottschalk G."/>
        </authorList>
    </citation>
    <scope>NUCLEOTIDE SEQUENCE [LARGE SCALE GENOMIC DNA]</scope>
    <source>
        <strain>ATCC 17699 / DSM 428 / KCTC 22496 / NCIMB 10442 / H16 / Stanier 337</strain>
    </source>
</reference>
<keyword id="KW-0342">GTP-binding</keyword>
<keyword id="KW-0378">Hydrolase</keyword>
<keyword id="KW-0479">Metal-binding</keyword>
<keyword id="KW-0533">Nickel</keyword>
<keyword id="KW-0547">Nucleotide-binding</keyword>
<keyword id="KW-0614">Plasmid</keyword>
<keyword id="KW-1185">Reference proteome</keyword>
<keyword id="KW-0862">Zinc</keyword>
<dbReference type="EMBL" id="X70183">
    <property type="protein sequence ID" value="CAA49732.1"/>
    <property type="molecule type" value="Genomic_DNA"/>
</dbReference>
<dbReference type="EMBL" id="AY305378">
    <property type="protein sequence ID" value="AAP85769.1"/>
    <property type="molecule type" value="Genomic_DNA"/>
</dbReference>
<dbReference type="PIR" id="I39529">
    <property type="entry name" value="I39529"/>
</dbReference>
<dbReference type="RefSeq" id="WP_011153938.1">
    <property type="nucleotide sequence ID" value="NC_005241.1"/>
</dbReference>
<dbReference type="SMR" id="P31902"/>
<dbReference type="KEGG" id="reh:PHG013"/>
<dbReference type="PATRIC" id="fig|381666.6.peg.9"/>
<dbReference type="eggNOG" id="COG0378">
    <property type="taxonomic scope" value="Bacteria"/>
</dbReference>
<dbReference type="HOGENOM" id="CLU_056148_1_0_4"/>
<dbReference type="OrthoDB" id="9802035at2"/>
<dbReference type="Proteomes" id="UP000008210">
    <property type="component" value="Plasmid megaplasmid pHG1"/>
</dbReference>
<dbReference type="GO" id="GO:0005525">
    <property type="term" value="F:GTP binding"/>
    <property type="evidence" value="ECO:0007669"/>
    <property type="project" value="UniProtKB-KW"/>
</dbReference>
<dbReference type="GO" id="GO:0003924">
    <property type="term" value="F:GTPase activity"/>
    <property type="evidence" value="ECO:0007669"/>
    <property type="project" value="InterPro"/>
</dbReference>
<dbReference type="GO" id="GO:0016151">
    <property type="term" value="F:nickel cation binding"/>
    <property type="evidence" value="ECO:0007669"/>
    <property type="project" value="InterPro"/>
</dbReference>
<dbReference type="GO" id="GO:0008270">
    <property type="term" value="F:zinc ion binding"/>
    <property type="evidence" value="ECO:0007669"/>
    <property type="project" value="TreeGrafter"/>
</dbReference>
<dbReference type="GO" id="GO:0051604">
    <property type="term" value="P:protein maturation"/>
    <property type="evidence" value="ECO:0007669"/>
    <property type="project" value="InterPro"/>
</dbReference>
<dbReference type="CDD" id="cd05390">
    <property type="entry name" value="HypB"/>
    <property type="match status" value="1"/>
</dbReference>
<dbReference type="Gene3D" id="3.40.50.300">
    <property type="entry name" value="P-loop containing nucleotide triphosphate hydrolases"/>
    <property type="match status" value="1"/>
</dbReference>
<dbReference type="InterPro" id="IPR003495">
    <property type="entry name" value="CobW/HypB/UreG_nucleotide-bd"/>
</dbReference>
<dbReference type="InterPro" id="IPR004392">
    <property type="entry name" value="Hyd_mat_HypB"/>
</dbReference>
<dbReference type="InterPro" id="IPR027417">
    <property type="entry name" value="P-loop_NTPase"/>
</dbReference>
<dbReference type="NCBIfam" id="TIGR00073">
    <property type="entry name" value="hypB"/>
    <property type="match status" value="2"/>
</dbReference>
<dbReference type="PANTHER" id="PTHR30134:SF2">
    <property type="entry name" value="HYDROGENASE MATURATION FACTOR HYPB"/>
    <property type="match status" value="1"/>
</dbReference>
<dbReference type="PANTHER" id="PTHR30134">
    <property type="entry name" value="HYDROGENASE PROTEIN ASSEMBLY PROTEIN, NICKEL CHAPERONE"/>
    <property type="match status" value="1"/>
</dbReference>
<dbReference type="Pfam" id="PF02492">
    <property type="entry name" value="cobW"/>
    <property type="match status" value="1"/>
</dbReference>
<dbReference type="SUPFAM" id="SSF52540">
    <property type="entry name" value="P-loop containing nucleoside triphosphate hydrolases"/>
    <property type="match status" value="1"/>
</dbReference>
<evidence type="ECO:0000250" key="1">
    <source>
        <dbReference type="UniProtKB" id="P0AAN3"/>
    </source>
</evidence>
<evidence type="ECO:0000256" key="2">
    <source>
        <dbReference type="SAM" id="MobiDB-lite"/>
    </source>
</evidence>
<evidence type="ECO:0000305" key="3"/>
<name>HYPB_CUPNH</name>
<feature type="chain" id="PRO_0000201434" description="Hydrogenase maturation factor HypB">
    <location>
        <begin position="1"/>
        <end position="361"/>
    </location>
</feature>
<feature type="region of interest" description="Disordered" evidence="2">
    <location>
        <begin position="14"/>
        <end position="37"/>
    </location>
</feature>
<feature type="region of interest" description="G-domain" evidence="1">
    <location>
        <begin position="99"/>
        <end position="300"/>
    </location>
</feature>
<feature type="region of interest" description="Disordered" evidence="2">
    <location>
        <begin position="183"/>
        <end position="213"/>
    </location>
</feature>
<feature type="compositionally biased region" description="Basic and acidic residues" evidence="2">
    <location>
        <begin position="14"/>
        <end position="25"/>
    </location>
</feature>
<feature type="compositionally biased region" description="Basic and acidic residues" evidence="2">
    <location>
        <begin position="189"/>
        <end position="213"/>
    </location>
</feature>
<feature type="binding site" evidence="1">
    <location>
        <position position="2"/>
    </location>
    <ligand>
        <name>Ni(2+)</name>
        <dbReference type="ChEBI" id="CHEBI:49786"/>
        <label>1</label>
    </ligand>
</feature>
<feature type="binding site" evidence="1">
    <location>
        <position position="5"/>
    </location>
    <ligand>
        <name>Ni(2+)</name>
        <dbReference type="ChEBI" id="CHEBI:49786"/>
        <label>1</label>
    </ligand>
</feature>
<feature type="binding site" evidence="1">
    <location>
        <position position="7"/>
    </location>
    <ligand>
        <name>Ni(2+)</name>
        <dbReference type="ChEBI" id="CHEBI:49786"/>
        <label>1</label>
    </ligand>
</feature>
<feature type="binding site" evidence="1">
    <location>
        <position position="162"/>
    </location>
    <ligand>
        <name>Ni(2+)</name>
        <dbReference type="ChEBI" id="CHEBI:49786"/>
        <label>2</label>
    </ligand>
</feature>
<feature type="binding site" evidence="1">
    <location>
        <position position="162"/>
    </location>
    <ligand>
        <name>Zn(2+)</name>
        <dbReference type="ChEBI" id="CHEBI:29105"/>
    </ligand>
</feature>
<feature type="binding site" evidence="1">
    <location>
        <position position="163"/>
    </location>
    <ligand>
        <name>Ni(2+)</name>
        <dbReference type="ChEBI" id="CHEBI:49786"/>
        <label>2</label>
    </ligand>
</feature>
<feature type="binding site" evidence="1">
    <location>
        <position position="163"/>
    </location>
    <ligand>
        <name>Zn(2+)</name>
        <dbReference type="ChEBI" id="CHEBI:29105"/>
    </ligand>
</feature>
<feature type="binding site" evidence="1">
    <location>
        <position position="231"/>
    </location>
    <ligand>
        <name>Ni(2+)</name>
        <dbReference type="ChEBI" id="CHEBI:49786"/>
        <label>2</label>
    </ligand>
</feature>
<feature type="binding site" evidence="1">
    <location>
        <position position="231"/>
    </location>
    <ligand>
        <name>Zn(2+)</name>
        <dbReference type="ChEBI" id="CHEBI:29105"/>
    </ligand>
</feature>
<sequence>MCVICGCNTNHETARQDENKGEHAPGRGLVDTGTEPPGAAHVRIDASTGDLHYGAGPAHVSVPGLSQARAIKLEQDVLGHNNRLAAHNRQHFVAHGVLALNLVSSPGSGKTTLLCTTIEALRRCRADLQLAVIEGDQQTSHDAERIRATGVPAIQINTGKGCHLDALMVANAYERLPLHAAAHAHTHEHRQEDGQHSHHHDHEHARHDHHDHRSSGIGSVLFIENVGNLVCPAMWDLGESAKVAILSVTEGEDKPLKYPDMFAAASLMILNKIDLLPHLRFDVARCIEYARQVNPHLQVLQLSAATGEGVDEWLDWMLAGGAAAGAAAATDGARMRIAAPEAGIAALGTQLAPGPAVSKEM</sequence>
<geneLocation type="plasmid">
    <name>megaplasmid pHG1</name>
</geneLocation>
<accession>P31902</accession>
<comment type="function">
    <text evidence="1">Involved in the maturation of [NiFe] hydrogenases. Required for nickel insertion into the metal center of the hydrogenase. Exhibits a low intrinsic GTPase activity, which is essential for nickel insertion.</text>
</comment>
<comment type="similarity">
    <text evidence="3">Belongs to the SIMIBI class G3E GTPase family. HypB/HupM subfamily.</text>
</comment>
<organism>
    <name type="scientific">Cupriavidus necator (strain ATCC 17699 / DSM 428 / KCTC 22496 / NCIMB 10442 / H16 / Stanier 337)</name>
    <name type="common">Ralstonia eutropha</name>
    <dbReference type="NCBI Taxonomy" id="381666"/>
    <lineage>
        <taxon>Bacteria</taxon>
        <taxon>Pseudomonadati</taxon>
        <taxon>Pseudomonadota</taxon>
        <taxon>Betaproteobacteria</taxon>
        <taxon>Burkholderiales</taxon>
        <taxon>Burkholderiaceae</taxon>
        <taxon>Cupriavidus</taxon>
    </lineage>
</organism>
<gene>
    <name type="primary">hypB</name>
    <name type="ordered locus">PHG013</name>
</gene>
<proteinExistence type="inferred from homology"/>